<gene>
    <name evidence="1" type="primary">purL</name>
    <name type="ordered locus">MCCL_0692</name>
</gene>
<dbReference type="EC" id="6.3.5.3" evidence="1"/>
<dbReference type="EMBL" id="AP009484">
    <property type="protein sequence ID" value="BAH17399.1"/>
    <property type="molecule type" value="Genomic_DNA"/>
</dbReference>
<dbReference type="RefSeq" id="WP_012656600.1">
    <property type="nucleotide sequence ID" value="NC_011999.1"/>
</dbReference>
<dbReference type="SMR" id="B9EAY8"/>
<dbReference type="STRING" id="458233.MCCL_0692"/>
<dbReference type="KEGG" id="mcl:MCCL_0692"/>
<dbReference type="eggNOG" id="COG0046">
    <property type="taxonomic scope" value="Bacteria"/>
</dbReference>
<dbReference type="HOGENOM" id="CLU_003100_0_1_9"/>
<dbReference type="OrthoDB" id="9804441at2"/>
<dbReference type="UniPathway" id="UPA00074">
    <property type="reaction ID" value="UER00128"/>
</dbReference>
<dbReference type="Proteomes" id="UP000001383">
    <property type="component" value="Chromosome"/>
</dbReference>
<dbReference type="GO" id="GO:0005737">
    <property type="term" value="C:cytoplasm"/>
    <property type="evidence" value="ECO:0007669"/>
    <property type="project" value="UniProtKB-SubCell"/>
</dbReference>
<dbReference type="GO" id="GO:0005524">
    <property type="term" value="F:ATP binding"/>
    <property type="evidence" value="ECO:0007669"/>
    <property type="project" value="UniProtKB-UniRule"/>
</dbReference>
<dbReference type="GO" id="GO:0000287">
    <property type="term" value="F:magnesium ion binding"/>
    <property type="evidence" value="ECO:0007669"/>
    <property type="project" value="UniProtKB-UniRule"/>
</dbReference>
<dbReference type="GO" id="GO:0004642">
    <property type="term" value="F:phosphoribosylformylglycinamidine synthase activity"/>
    <property type="evidence" value="ECO:0007669"/>
    <property type="project" value="UniProtKB-UniRule"/>
</dbReference>
<dbReference type="GO" id="GO:0006189">
    <property type="term" value="P:'de novo' IMP biosynthetic process"/>
    <property type="evidence" value="ECO:0007669"/>
    <property type="project" value="UniProtKB-UniRule"/>
</dbReference>
<dbReference type="CDD" id="cd02203">
    <property type="entry name" value="PurL_repeat1"/>
    <property type="match status" value="1"/>
</dbReference>
<dbReference type="CDD" id="cd02204">
    <property type="entry name" value="PurL_repeat2"/>
    <property type="match status" value="1"/>
</dbReference>
<dbReference type="FunFam" id="3.30.1330.10:FF:000004">
    <property type="entry name" value="Phosphoribosylformylglycinamidine synthase subunit PurL"/>
    <property type="match status" value="1"/>
</dbReference>
<dbReference type="Gene3D" id="3.90.650.10">
    <property type="entry name" value="PurM-like C-terminal domain"/>
    <property type="match status" value="2"/>
</dbReference>
<dbReference type="Gene3D" id="3.30.1330.10">
    <property type="entry name" value="PurM-like, N-terminal domain"/>
    <property type="match status" value="2"/>
</dbReference>
<dbReference type="HAMAP" id="MF_00420">
    <property type="entry name" value="PurL_2"/>
    <property type="match status" value="1"/>
</dbReference>
<dbReference type="InterPro" id="IPR010074">
    <property type="entry name" value="PRibForGlyAmidine_synth_PurL"/>
</dbReference>
<dbReference type="InterPro" id="IPR041609">
    <property type="entry name" value="PurL_linker"/>
</dbReference>
<dbReference type="InterPro" id="IPR010918">
    <property type="entry name" value="PurM-like_C_dom"/>
</dbReference>
<dbReference type="InterPro" id="IPR036676">
    <property type="entry name" value="PurM-like_C_sf"/>
</dbReference>
<dbReference type="InterPro" id="IPR016188">
    <property type="entry name" value="PurM-like_N"/>
</dbReference>
<dbReference type="InterPro" id="IPR036921">
    <property type="entry name" value="PurM-like_N_sf"/>
</dbReference>
<dbReference type="NCBIfam" id="TIGR01736">
    <property type="entry name" value="FGAM_synth_II"/>
    <property type="match status" value="1"/>
</dbReference>
<dbReference type="NCBIfam" id="NF002290">
    <property type="entry name" value="PRK01213.1"/>
    <property type="match status" value="1"/>
</dbReference>
<dbReference type="PANTHER" id="PTHR43555">
    <property type="entry name" value="PHOSPHORIBOSYLFORMYLGLYCINAMIDINE SYNTHASE SUBUNIT PURL"/>
    <property type="match status" value="1"/>
</dbReference>
<dbReference type="PANTHER" id="PTHR43555:SF1">
    <property type="entry name" value="PHOSPHORIBOSYLFORMYLGLYCINAMIDINE SYNTHASE SUBUNIT PURL"/>
    <property type="match status" value="1"/>
</dbReference>
<dbReference type="Pfam" id="PF00586">
    <property type="entry name" value="AIRS"/>
    <property type="match status" value="2"/>
</dbReference>
<dbReference type="Pfam" id="PF02769">
    <property type="entry name" value="AIRS_C"/>
    <property type="match status" value="1"/>
</dbReference>
<dbReference type="Pfam" id="PF18072">
    <property type="entry name" value="FGAR-AT_linker"/>
    <property type="match status" value="1"/>
</dbReference>
<dbReference type="PIRSF" id="PIRSF001587">
    <property type="entry name" value="FGAM_synthase_II"/>
    <property type="match status" value="1"/>
</dbReference>
<dbReference type="SUPFAM" id="SSF56042">
    <property type="entry name" value="PurM C-terminal domain-like"/>
    <property type="match status" value="2"/>
</dbReference>
<dbReference type="SUPFAM" id="SSF55326">
    <property type="entry name" value="PurM N-terminal domain-like"/>
    <property type="match status" value="2"/>
</dbReference>
<feature type="chain" id="PRO_1000134901" description="Phosphoribosylformylglycinamidine synthase subunit PurL">
    <location>
        <begin position="1"/>
        <end position="728"/>
    </location>
</feature>
<feature type="active site" evidence="1">
    <location>
        <position position="54"/>
    </location>
</feature>
<feature type="active site" description="Proton acceptor" evidence="1">
    <location>
        <position position="100"/>
    </location>
</feature>
<feature type="binding site" evidence="1">
    <location>
        <position position="57"/>
    </location>
    <ligand>
        <name>ATP</name>
        <dbReference type="ChEBI" id="CHEBI:30616"/>
    </ligand>
</feature>
<feature type="binding site" evidence="1">
    <location>
        <position position="96"/>
    </location>
    <ligand>
        <name>ATP</name>
        <dbReference type="ChEBI" id="CHEBI:30616"/>
    </ligand>
</feature>
<feature type="binding site" evidence="1">
    <location>
        <position position="98"/>
    </location>
    <ligand>
        <name>Mg(2+)</name>
        <dbReference type="ChEBI" id="CHEBI:18420"/>
        <label>1</label>
    </ligand>
</feature>
<feature type="binding site" evidence="1">
    <location>
        <begin position="99"/>
        <end position="102"/>
    </location>
    <ligand>
        <name>substrate</name>
    </ligand>
</feature>
<feature type="binding site" evidence="1">
    <location>
        <position position="121"/>
    </location>
    <ligand>
        <name>substrate</name>
    </ligand>
</feature>
<feature type="binding site" evidence="1">
    <location>
        <position position="122"/>
    </location>
    <ligand>
        <name>Mg(2+)</name>
        <dbReference type="ChEBI" id="CHEBI:18420"/>
        <label>2</label>
    </ligand>
</feature>
<feature type="binding site" evidence="1">
    <location>
        <position position="245"/>
    </location>
    <ligand>
        <name>substrate</name>
    </ligand>
</feature>
<feature type="binding site" evidence="1">
    <location>
        <position position="273"/>
    </location>
    <ligand>
        <name>Mg(2+)</name>
        <dbReference type="ChEBI" id="CHEBI:18420"/>
        <label>2</label>
    </ligand>
</feature>
<feature type="binding site" evidence="1">
    <location>
        <begin position="317"/>
        <end position="319"/>
    </location>
    <ligand>
        <name>substrate</name>
    </ligand>
</feature>
<feature type="binding site" evidence="1">
    <location>
        <position position="495"/>
    </location>
    <ligand>
        <name>ATP</name>
        <dbReference type="ChEBI" id="CHEBI:30616"/>
    </ligand>
</feature>
<feature type="binding site" evidence="1">
    <location>
        <position position="532"/>
    </location>
    <ligand>
        <name>ATP</name>
        <dbReference type="ChEBI" id="CHEBI:30616"/>
    </ligand>
</feature>
<feature type="binding site" evidence="1">
    <location>
        <position position="533"/>
    </location>
    <ligand>
        <name>Mg(2+)</name>
        <dbReference type="ChEBI" id="CHEBI:18420"/>
        <label>1</label>
    </ligand>
</feature>
<feature type="binding site" evidence="1">
    <location>
        <position position="535"/>
    </location>
    <ligand>
        <name>substrate</name>
    </ligand>
</feature>
<organism>
    <name type="scientific">Macrococcus caseolyticus (strain JCSC5402)</name>
    <name type="common">Macrococcoides caseolyticum</name>
    <dbReference type="NCBI Taxonomy" id="458233"/>
    <lineage>
        <taxon>Bacteria</taxon>
        <taxon>Bacillati</taxon>
        <taxon>Bacillota</taxon>
        <taxon>Bacilli</taxon>
        <taxon>Bacillales</taxon>
        <taxon>Staphylococcaceae</taxon>
        <taxon>Macrococcoides</taxon>
    </lineage>
</organism>
<protein>
    <recommendedName>
        <fullName evidence="1">Phosphoribosylformylglycinamidine synthase subunit PurL</fullName>
        <shortName evidence="1">FGAM synthase</shortName>
        <ecNumber evidence="1">6.3.5.3</ecNumber>
    </recommendedName>
    <alternativeName>
        <fullName evidence="1">Formylglycinamide ribonucleotide amidotransferase subunit II</fullName>
        <shortName evidence="1">FGAR amidotransferase II</shortName>
        <shortName evidence="1">FGAR-AT II</shortName>
    </alternativeName>
    <alternativeName>
        <fullName evidence="1">Glutamine amidotransferase PurL</fullName>
    </alternativeName>
    <alternativeName>
        <fullName evidence="1">Phosphoribosylformylglycinamidine synthase subunit II</fullName>
    </alternativeName>
</protein>
<accession>B9EAY8</accession>
<keyword id="KW-0067">ATP-binding</keyword>
<keyword id="KW-0963">Cytoplasm</keyword>
<keyword id="KW-0436">Ligase</keyword>
<keyword id="KW-0460">Magnesium</keyword>
<keyword id="KW-0479">Metal-binding</keyword>
<keyword id="KW-0547">Nucleotide-binding</keyword>
<keyword id="KW-0658">Purine biosynthesis</keyword>
<keyword id="KW-1185">Reference proteome</keyword>
<sequence length="728" mass="78673">MVKFLEPTANEIKENKLYQDMGLSDKEYDKVVDILGRMPNYTEIGIFSVMWSEHCSYKHSKPFLKQFPTTGERVLMGPGEGAGVVDIGDNQAVVFKVESHNHPSAIEPYQGAATGVGGIVRDIVSIGARPIQLLNSLRFGELTEKQNQRLFKGVVAGIGGYGNCIGIPTVAGEIEFDRQYEGNPLVNAMCVGIIDHDKIQKGTAKGEGNPVIYVGLKTGRDGIHGATFASEELSEESESKRPSVQIGDPFVGKKLMEATLKAITFPELVGIQDMGAAGLTSSSSEMAAKGGSGIHLELEKVPTREAGISPYEMMLSETQERMLLVVEKGTEQKFLDLFDHYELDSAVIGQVTDTDRFVLTYEGEVFADIPVQPLSDEAPVYILEGRAAQFDAVNHDYSNIDAQDTLMKLLSHPTMASKNWAYSQYDQQVGANTIIKPGLSAGVTRVEGTKKAIAATLDGEARYVFNNPYEGGKMVVAEAYRNLISVGSLPLAMTDCLNYGNPEKPEIYQQLADSTRGMAEACGALNTPVVSGNVSLYNETKGDAIFPTPVVGMVGLIEDVDYLVDFKPSKGDTIYFVGEVKPDFGGSQLEKLLFNEVAHTDVAIDLEQEVARGEAIRQHIIDGKLGHVQAVGKGGVGVKLAQIAAYFNTGLEAQLDVSDAELFAETQGNYIVIAKQGKEIDIDGAEAIGTFGTESFKLSTNQGEVTLDVNRMTEAWKGAIHACMTSEV</sequence>
<evidence type="ECO:0000255" key="1">
    <source>
        <dbReference type="HAMAP-Rule" id="MF_00420"/>
    </source>
</evidence>
<reference key="1">
    <citation type="journal article" date="2009" name="J. Bacteriol.">
        <title>Complete genome sequence of Macrococcus caseolyticus strain JCSCS5402, reflecting the ancestral genome of the human-pathogenic staphylococci.</title>
        <authorList>
            <person name="Baba T."/>
            <person name="Kuwahara-Arai K."/>
            <person name="Uchiyama I."/>
            <person name="Takeuchi F."/>
            <person name="Ito T."/>
            <person name="Hiramatsu K."/>
        </authorList>
    </citation>
    <scope>NUCLEOTIDE SEQUENCE [LARGE SCALE GENOMIC DNA]</scope>
    <source>
        <strain>JCSC5402</strain>
    </source>
</reference>
<comment type="function">
    <text evidence="1">Part of the phosphoribosylformylglycinamidine synthase complex involved in the purines biosynthetic pathway. Catalyzes the ATP-dependent conversion of formylglycinamide ribonucleotide (FGAR) and glutamine to yield formylglycinamidine ribonucleotide (FGAM) and glutamate. The FGAM synthase complex is composed of three subunits. PurQ produces an ammonia molecule by converting glutamine to glutamate. PurL transfers the ammonia molecule to FGAR to form FGAM in an ATP-dependent manner. PurS interacts with PurQ and PurL and is thought to assist in the transfer of the ammonia molecule from PurQ to PurL.</text>
</comment>
<comment type="catalytic activity">
    <reaction evidence="1">
        <text>N(2)-formyl-N(1)-(5-phospho-beta-D-ribosyl)glycinamide + L-glutamine + ATP + H2O = 2-formamido-N(1)-(5-O-phospho-beta-D-ribosyl)acetamidine + L-glutamate + ADP + phosphate + H(+)</text>
        <dbReference type="Rhea" id="RHEA:17129"/>
        <dbReference type="ChEBI" id="CHEBI:15377"/>
        <dbReference type="ChEBI" id="CHEBI:15378"/>
        <dbReference type="ChEBI" id="CHEBI:29985"/>
        <dbReference type="ChEBI" id="CHEBI:30616"/>
        <dbReference type="ChEBI" id="CHEBI:43474"/>
        <dbReference type="ChEBI" id="CHEBI:58359"/>
        <dbReference type="ChEBI" id="CHEBI:147286"/>
        <dbReference type="ChEBI" id="CHEBI:147287"/>
        <dbReference type="ChEBI" id="CHEBI:456216"/>
        <dbReference type="EC" id="6.3.5.3"/>
    </reaction>
</comment>
<comment type="pathway">
    <text evidence="1">Purine metabolism; IMP biosynthesis via de novo pathway; 5-amino-1-(5-phospho-D-ribosyl)imidazole from N(2)-formyl-N(1)-(5-phospho-D-ribosyl)glycinamide: step 1/2.</text>
</comment>
<comment type="subunit">
    <text evidence="1">Monomer. Part of the FGAM synthase complex composed of 1 PurL, 1 PurQ and 2 PurS subunits.</text>
</comment>
<comment type="subcellular location">
    <subcellularLocation>
        <location evidence="1">Cytoplasm</location>
    </subcellularLocation>
</comment>
<comment type="similarity">
    <text evidence="1">Belongs to the FGAMS family.</text>
</comment>
<name>PURL_MACCJ</name>
<proteinExistence type="inferred from homology"/>